<gene>
    <name evidence="1" type="primary">htpX</name>
    <name type="ordered locus">LPC_0264</name>
</gene>
<feature type="chain" id="PRO_1000077467" description="Protease HtpX">
    <location>
        <begin position="1"/>
        <end position="280"/>
    </location>
</feature>
<feature type="transmembrane region" description="Helical" evidence="1">
    <location>
        <begin position="7"/>
        <end position="26"/>
    </location>
</feature>
<feature type="transmembrane region" description="Helical" evidence="1">
    <location>
        <begin position="30"/>
        <end position="49"/>
    </location>
</feature>
<feature type="transmembrane region" description="Helical" evidence="1">
    <location>
        <begin position="146"/>
        <end position="166"/>
    </location>
</feature>
<feature type="transmembrane region" description="Helical" evidence="1">
    <location>
        <begin position="178"/>
        <end position="198"/>
    </location>
</feature>
<feature type="active site" evidence="1">
    <location>
        <position position="130"/>
    </location>
</feature>
<feature type="binding site" evidence="1">
    <location>
        <position position="129"/>
    </location>
    <ligand>
        <name>Zn(2+)</name>
        <dbReference type="ChEBI" id="CHEBI:29105"/>
        <note>catalytic</note>
    </ligand>
</feature>
<feature type="binding site" evidence="1">
    <location>
        <position position="133"/>
    </location>
    <ligand>
        <name>Zn(2+)</name>
        <dbReference type="ChEBI" id="CHEBI:29105"/>
        <note>catalytic</note>
    </ligand>
</feature>
<feature type="binding site" evidence="1">
    <location>
        <position position="203"/>
    </location>
    <ligand>
        <name>Zn(2+)</name>
        <dbReference type="ChEBI" id="CHEBI:29105"/>
        <note>catalytic</note>
    </ligand>
</feature>
<protein>
    <recommendedName>
        <fullName evidence="1">Protease HtpX</fullName>
        <ecNumber evidence="1">3.4.24.-</ecNumber>
    </recommendedName>
    <alternativeName>
        <fullName evidence="1">Heat shock protein HtpX</fullName>
    </alternativeName>
</protein>
<organism>
    <name type="scientific">Legionella pneumophila (strain Corby)</name>
    <dbReference type="NCBI Taxonomy" id="400673"/>
    <lineage>
        <taxon>Bacteria</taxon>
        <taxon>Pseudomonadati</taxon>
        <taxon>Pseudomonadota</taxon>
        <taxon>Gammaproteobacteria</taxon>
        <taxon>Legionellales</taxon>
        <taxon>Legionellaceae</taxon>
        <taxon>Legionella</taxon>
    </lineage>
</organism>
<reference key="1">
    <citation type="submission" date="2006-11" db="EMBL/GenBank/DDBJ databases">
        <title>Identification and characterization of a new conjugation/ type IVA secretion system (trb/tra) of L. pneumophila Corby localized on a mobile genomic island.</title>
        <authorList>
            <person name="Gloeckner G."/>
            <person name="Albert-Weissenberger C."/>
            <person name="Weinmann E."/>
            <person name="Jacobi S."/>
            <person name="Schunder E."/>
            <person name="Steinert M."/>
            <person name="Buchrieser C."/>
            <person name="Hacker J."/>
            <person name="Heuner K."/>
        </authorList>
    </citation>
    <scope>NUCLEOTIDE SEQUENCE [LARGE SCALE GENOMIC DNA]</scope>
    <source>
        <strain>Corby</strain>
    </source>
</reference>
<name>HTPX_LEGPC</name>
<sequence>MINNLKTFILLASLTALLVVIGGLLGGSTGMLVALLFAGIMNFSAYWYSDTLVLKMYNAEPLSNNHFVYHIVSELAHRAGTSVPKVYLINNSTPNAFATGRNPENASIAVTTGLLDRLTQEEITGVLAHELAHVIHRDTLINVVSATIAGAISGIANMFMWLSMFGHNSNNEEGVHPVVGMIMMIVAPLAAGLIQMAISRSREFEADAGGARISGNPQWLASALLKLDQANHEQYFDEAETHPATAHLFIINPLNGEKLANLFSTHPSTAERVARLRAMY</sequence>
<accession>A5IA60</accession>
<proteinExistence type="inferred from homology"/>
<comment type="cofactor">
    <cofactor evidence="1">
        <name>Zn(2+)</name>
        <dbReference type="ChEBI" id="CHEBI:29105"/>
    </cofactor>
    <text evidence="1">Binds 1 zinc ion per subunit.</text>
</comment>
<comment type="subcellular location">
    <subcellularLocation>
        <location evidence="1">Cell inner membrane</location>
        <topology evidence="1">Multi-pass membrane protein</topology>
    </subcellularLocation>
</comment>
<comment type="similarity">
    <text evidence="1">Belongs to the peptidase M48B family.</text>
</comment>
<keyword id="KW-0997">Cell inner membrane</keyword>
<keyword id="KW-1003">Cell membrane</keyword>
<keyword id="KW-0378">Hydrolase</keyword>
<keyword id="KW-0472">Membrane</keyword>
<keyword id="KW-0479">Metal-binding</keyword>
<keyword id="KW-0482">Metalloprotease</keyword>
<keyword id="KW-0645">Protease</keyword>
<keyword id="KW-0346">Stress response</keyword>
<keyword id="KW-0812">Transmembrane</keyword>
<keyword id="KW-1133">Transmembrane helix</keyword>
<keyword id="KW-0862">Zinc</keyword>
<evidence type="ECO:0000255" key="1">
    <source>
        <dbReference type="HAMAP-Rule" id="MF_00188"/>
    </source>
</evidence>
<dbReference type="EC" id="3.4.24.-" evidence="1"/>
<dbReference type="EMBL" id="CP000675">
    <property type="protein sequence ID" value="ABQ54260.1"/>
    <property type="molecule type" value="Genomic_DNA"/>
</dbReference>
<dbReference type="RefSeq" id="WP_011945434.1">
    <property type="nucleotide sequence ID" value="NZ_JAPMSS010000003.1"/>
</dbReference>
<dbReference type="SMR" id="A5IA60"/>
<dbReference type="KEGG" id="lpc:LPC_0264"/>
<dbReference type="HOGENOM" id="CLU_042266_3_0_6"/>
<dbReference type="GO" id="GO:0005886">
    <property type="term" value="C:plasma membrane"/>
    <property type="evidence" value="ECO:0007669"/>
    <property type="project" value="UniProtKB-SubCell"/>
</dbReference>
<dbReference type="GO" id="GO:0004222">
    <property type="term" value="F:metalloendopeptidase activity"/>
    <property type="evidence" value="ECO:0007669"/>
    <property type="project" value="UniProtKB-UniRule"/>
</dbReference>
<dbReference type="GO" id="GO:0008270">
    <property type="term" value="F:zinc ion binding"/>
    <property type="evidence" value="ECO:0007669"/>
    <property type="project" value="UniProtKB-UniRule"/>
</dbReference>
<dbReference type="GO" id="GO:0006508">
    <property type="term" value="P:proteolysis"/>
    <property type="evidence" value="ECO:0007669"/>
    <property type="project" value="UniProtKB-KW"/>
</dbReference>
<dbReference type="CDD" id="cd07336">
    <property type="entry name" value="M48B_HtpX_like"/>
    <property type="match status" value="1"/>
</dbReference>
<dbReference type="Gene3D" id="3.30.2010.10">
    <property type="entry name" value="Metalloproteases ('zincins'), catalytic domain"/>
    <property type="match status" value="1"/>
</dbReference>
<dbReference type="HAMAP" id="MF_00188">
    <property type="entry name" value="Pept_M48_protease_HtpX"/>
    <property type="match status" value="1"/>
</dbReference>
<dbReference type="InterPro" id="IPR050083">
    <property type="entry name" value="HtpX_protease"/>
</dbReference>
<dbReference type="InterPro" id="IPR022919">
    <property type="entry name" value="Pept_M48_protease_HtpX"/>
</dbReference>
<dbReference type="InterPro" id="IPR001915">
    <property type="entry name" value="Peptidase_M48"/>
</dbReference>
<dbReference type="NCBIfam" id="NF002826">
    <property type="entry name" value="PRK03001.1"/>
    <property type="match status" value="1"/>
</dbReference>
<dbReference type="PANTHER" id="PTHR43221">
    <property type="entry name" value="PROTEASE HTPX"/>
    <property type="match status" value="1"/>
</dbReference>
<dbReference type="PANTHER" id="PTHR43221:SF1">
    <property type="entry name" value="PROTEASE HTPX"/>
    <property type="match status" value="1"/>
</dbReference>
<dbReference type="Pfam" id="PF01435">
    <property type="entry name" value="Peptidase_M48"/>
    <property type="match status" value="1"/>
</dbReference>
<dbReference type="PROSITE" id="PS00142">
    <property type="entry name" value="ZINC_PROTEASE"/>
    <property type="match status" value="1"/>
</dbReference>